<protein>
    <recommendedName>
        <fullName>Non-structural protein 5</fullName>
        <shortName>NS5</shortName>
    </recommendedName>
</protein>
<dbReference type="EMBL" id="AF389470">
    <property type="protein sequence ID" value="AAK73528.1"/>
    <property type="molecule type" value="Genomic_RNA"/>
</dbReference>
<dbReference type="RefSeq" id="NP_149154.1">
    <property type="nucleotide sequence ID" value="NC_003024.1"/>
</dbReference>
<dbReference type="SMR" id="Q91ID3"/>
<dbReference type="KEGG" id="vg:2598196"/>
<dbReference type="Proteomes" id="UP000006712">
    <property type="component" value="Genome"/>
</dbReference>
<organismHost>
    <name type="scientific">Lymantria dispar</name>
    <name type="common">Gypsy moth</name>
    <name type="synonym">Porthetria dispar</name>
    <dbReference type="NCBI Taxonomy" id="13123"/>
</organismHost>
<sequence length="320" mass="35686">MEAFLLENRKPQITTLASGKTLKPATHRLNLPAYTKLIHELRTKTHAKVAISLSTDSQIHMVWVKSGLVFFTPSASHPAYVNFASSNRLTDVPALTKTTFPQSDVKLIETTPLPNDETSHVASFQLVTWMEGALNILNDLSKCAISFINQCEDTFKSGTNLNKELYNRCITAESRDFCNQMKFVLIGRLCYGQTTSPPPIQLYQYGVTPFISSDIICEGAAYRPIDVENYAMNSNHTVSYAPFFVPNETKPGSRIDLIMVNHLKKFNLMFDSWYKTGGSVMVSSRPERTQNEASVSQIMPTSVKHIANEDLTADDGEGSE</sequence>
<gene>
    <name type="primary">S9</name>
</gene>
<name>NS5_LDCPR</name>
<keyword id="KW-1185">Reference proteome</keyword>
<organism>
    <name type="scientific">Lymantria dispar cypovirus 1 (isolate Rao)</name>
    <name type="common">LdCPV-1</name>
    <dbReference type="NCBI Taxonomy" id="648169"/>
    <lineage>
        <taxon>Viruses</taxon>
        <taxon>Riboviria</taxon>
        <taxon>Orthornavirae</taxon>
        <taxon>Duplornaviricota</taxon>
        <taxon>Resentoviricetes</taxon>
        <taxon>Reovirales</taxon>
        <taxon>Spinareoviridae</taxon>
        <taxon>Cypovirus</taxon>
        <taxon>Cypovirus 1</taxon>
    </lineage>
</organism>
<reference key="1">
    <citation type="submission" date="2001-06" db="EMBL/GenBank/DDBJ databases">
        <title>Identification of dsRNA electrophoretypes of two cypoviruses from a dual infection in gypsy moth, Lymantria dispar.</title>
        <authorList>
            <person name="Rao S."/>
            <person name="Shapiro M."/>
            <person name="Lynn D."/>
            <person name="Hagiwara K."/>
            <person name="Blackmon B."/>
            <person name="Fang G."/>
            <person name="Carner G.R."/>
        </authorList>
    </citation>
    <scope>NUCLEOTIDE SEQUENCE [GENOMIC RNA]</scope>
</reference>
<accession>Q91ID3</accession>
<proteinExistence type="predicted"/>
<feature type="chain" id="PRO_0000403211" description="Non-structural protein 5">
    <location>
        <begin position="1"/>
        <end position="320"/>
    </location>
</feature>